<proteinExistence type="evidence at protein level"/>
<name>PURA_SCHPO</name>
<dbReference type="EC" id="6.3.4.4" evidence="1"/>
<dbReference type="EMBL" id="M98805">
    <property type="protein sequence ID" value="AAA70333.1"/>
    <property type="molecule type" value="mRNA"/>
</dbReference>
<dbReference type="EMBL" id="AB000538">
    <property type="protein sequence ID" value="BAA19144.1"/>
    <property type="molecule type" value="mRNA"/>
</dbReference>
<dbReference type="EMBL" id="CU329670">
    <property type="protein sequence ID" value="CAB59683.1"/>
    <property type="molecule type" value="Genomic_DNA"/>
</dbReference>
<dbReference type="PIR" id="A45027">
    <property type="entry name" value="A45027"/>
</dbReference>
<dbReference type="PIR" id="T37670">
    <property type="entry name" value="T37670"/>
</dbReference>
<dbReference type="RefSeq" id="NP_594664.1">
    <property type="nucleotide sequence ID" value="NM_001020093.2"/>
</dbReference>
<dbReference type="SMR" id="Q02787"/>
<dbReference type="BioGRID" id="279270">
    <property type="interactions" value="4"/>
</dbReference>
<dbReference type="FunCoup" id="Q02787">
    <property type="interactions" value="768"/>
</dbReference>
<dbReference type="STRING" id="284812.Q02787"/>
<dbReference type="iPTMnet" id="Q02787"/>
<dbReference type="PaxDb" id="4896-SPAC144.03.1"/>
<dbReference type="EnsemblFungi" id="SPAC144.03.1">
    <property type="protein sequence ID" value="SPAC144.03.1:pep"/>
    <property type="gene ID" value="SPAC144.03"/>
</dbReference>
<dbReference type="GeneID" id="2542823"/>
<dbReference type="KEGG" id="spo:2542823"/>
<dbReference type="PomBase" id="SPAC144.03">
    <property type="gene designation" value="ade2"/>
</dbReference>
<dbReference type="VEuPathDB" id="FungiDB:SPAC144.03"/>
<dbReference type="eggNOG" id="KOG1355">
    <property type="taxonomic scope" value="Eukaryota"/>
</dbReference>
<dbReference type="HOGENOM" id="CLU_029848_3_0_1"/>
<dbReference type="InParanoid" id="Q02787"/>
<dbReference type="OMA" id="FHHAKPI"/>
<dbReference type="PhylomeDB" id="Q02787"/>
<dbReference type="Reactome" id="R-SPO-73817">
    <property type="pathway name" value="Purine ribonucleoside monophosphate biosynthesis"/>
</dbReference>
<dbReference type="SABIO-RK" id="Q02787"/>
<dbReference type="UniPathway" id="UPA00075">
    <property type="reaction ID" value="UER00335"/>
</dbReference>
<dbReference type="PRO" id="PR:Q02787"/>
<dbReference type="Proteomes" id="UP000002485">
    <property type="component" value="Chromosome I"/>
</dbReference>
<dbReference type="GO" id="GO:0005737">
    <property type="term" value="C:cytoplasm"/>
    <property type="evidence" value="ECO:0000318"/>
    <property type="project" value="GO_Central"/>
</dbReference>
<dbReference type="GO" id="GO:0005829">
    <property type="term" value="C:cytosol"/>
    <property type="evidence" value="ECO:0007005"/>
    <property type="project" value="PomBase"/>
</dbReference>
<dbReference type="GO" id="GO:0005634">
    <property type="term" value="C:nucleus"/>
    <property type="evidence" value="ECO:0007005"/>
    <property type="project" value="PomBase"/>
</dbReference>
<dbReference type="GO" id="GO:0004019">
    <property type="term" value="F:adenylosuccinate synthase activity"/>
    <property type="evidence" value="ECO:0000314"/>
    <property type="project" value="PomBase"/>
</dbReference>
<dbReference type="GO" id="GO:0016208">
    <property type="term" value="F:AMP binding"/>
    <property type="evidence" value="ECO:0000314"/>
    <property type="project" value="PomBase"/>
</dbReference>
<dbReference type="GO" id="GO:0019002">
    <property type="term" value="F:GMP binding"/>
    <property type="evidence" value="ECO:0000314"/>
    <property type="project" value="PomBase"/>
</dbReference>
<dbReference type="GO" id="GO:0005525">
    <property type="term" value="F:GTP binding"/>
    <property type="evidence" value="ECO:0007669"/>
    <property type="project" value="UniProtKB-UniRule"/>
</dbReference>
<dbReference type="GO" id="GO:0000287">
    <property type="term" value="F:magnesium ion binding"/>
    <property type="evidence" value="ECO:0007669"/>
    <property type="project" value="UniProtKB-UniRule"/>
</dbReference>
<dbReference type="GO" id="GO:0044208">
    <property type="term" value="P:'de novo' AMP biosynthetic process"/>
    <property type="evidence" value="ECO:0000314"/>
    <property type="project" value="PomBase"/>
</dbReference>
<dbReference type="GO" id="GO:0046086">
    <property type="term" value="P:adenosine biosynthetic process"/>
    <property type="evidence" value="ECO:0000266"/>
    <property type="project" value="PomBase"/>
</dbReference>
<dbReference type="GO" id="GO:0071276">
    <property type="term" value="P:cellular response to cadmium ion"/>
    <property type="evidence" value="ECO:0000315"/>
    <property type="project" value="PomBase"/>
</dbReference>
<dbReference type="GO" id="GO:0046040">
    <property type="term" value="P:IMP metabolic process"/>
    <property type="evidence" value="ECO:0000318"/>
    <property type="project" value="GO_Central"/>
</dbReference>
<dbReference type="GO" id="GO:0006164">
    <property type="term" value="P:purine nucleotide biosynthetic process"/>
    <property type="evidence" value="ECO:0000315"/>
    <property type="project" value="PomBase"/>
</dbReference>
<dbReference type="CDD" id="cd03108">
    <property type="entry name" value="AdSS"/>
    <property type="match status" value="1"/>
</dbReference>
<dbReference type="FunFam" id="3.90.170.10:FF:000001">
    <property type="entry name" value="Adenylosuccinate synthetase"/>
    <property type="match status" value="1"/>
</dbReference>
<dbReference type="FunFam" id="1.10.300.10:FF:000002">
    <property type="entry name" value="Adenylosuccinate synthetase, chloroplastic"/>
    <property type="match status" value="1"/>
</dbReference>
<dbReference type="Gene3D" id="3.40.440.10">
    <property type="entry name" value="Adenylosuccinate Synthetase, subunit A, domain 1"/>
    <property type="match status" value="1"/>
</dbReference>
<dbReference type="Gene3D" id="1.10.300.10">
    <property type="entry name" value="Adenylosuccinate Synthetase, subunit A, domain 2"/>
    <property type="match status" value="1"/>
</dbReference>
<dbReference type="Gene3D" id="3.90.170.10">
    <property type="entry name" value="Adenylosuccinate Synthetase, subunit A, domain 3"/>
    <property type="match status" value="1"/>
</dbReference>
<dbReference type="HAMAP" id="MF_00011">
    <property type="entry name" value="Adenylosucc_synth"/>
    <property type="match status" value="1"/>
</dbReference>
<dbReference type="InterPro" id="IPR018220">
    <property type="entry name" value="Adenylosuccin_syn_GTP-bd"/>
</dbReference>
<dbReference type="InterPro" id="IPR033128">
    <property type="entry name" value="Adenylosuccin_syn_Lys_AS"/>
</dbReference>
<dbReference type="InterPro" id="IPR042109">
    <property type="entry name" value="Adenylosuccinate_synth_dom1"/>
</dbReference>
<dbReference type="InterPro" id="IPR042110">
    <property type="entry name" value="Adenylosuccinate_synth_dom2"/>
</dbReference>
<dbReference type="InterPro" id="IPR042111">
    <property type="entry name" value="Adenylosuccinate_synth_dom3"/>
</dbReference>
<dbReference type="InterPro" id="IPR001114">
    <property type="entry name" value="Adenylosuccinate_synthetase"/>
</dbReference>
<dbReference type="InterPro" id="IPR027417">
    <property type="entry name" value="P-loop_NTPase"/>
</dbReference>
<dbReference type="NCBIfam" id="NF002223">
    <property type="entry name" value="PRK01117.1"/>
    <property type="match status" value="1"/>
</dbReference>
<dbReference type="NCBIfam" id="TIGR00184">
    <property type="entry name" value="purA"/>
    <property type="match status" value="1"/>
</dbReference>
<dbReference type="PANTHER" id="PTHR11846">
    <property type="entry name" value="ADENYLOSUCCINATE SYNTHETASE"/>
    <property type="match status" value="1"/>
</dbReference>
<dbReference type="PANTHER" id="PTHR11846:SF0">
    <property type="entry name" value="ADENYLOSUCCINATE SYNTHETASE"/>
    <property type="match status" value="1"/>
</dbReference>
<dbReference type="Pfam" id="PF00709">
    <property type="entry name" value="Adenylsucc_synt"/>
    <property type="match status" value="1"/>
</dbReference>
<dbReference type="SMART" id="SM00788">
    <property type="entry name" value="Adenylsucc_synt"/>
    <property type="match status" value="1"/>
</dbReference>
<dbReference type="SUPFAM" id="SSF52540">
    <property type="entry name" value="P-loop containing nucleoside triphosphate hydrolases"/>
    <property type="match status" value="1"/>
</dbReference>
<dbReference type="PROSITE" id="PS01266">
    <property type="entry name" value="ADENYLOSUCCIN_SYN_1"/>
    <property type="match status" value="1"/>
</dbReference>
<dbReference type="PROSITE" id="PS00513">
    <property type="entry name" value="ADENYLOSUCCIN_SYN_2"/>
    <property type="match status" value="1"/>
</dbReference>
<reference key="1">
    <citation type="journal article" date="1992" name="Mol. Cell. Biol.">
        <title>Purine biosynthetic genes are required for cadmium tolerance in Schizosaccharomyces pombe.</title>
        <authorList>
            <person name="Speiser D.M."/>
            <person name="Ortiz D.F."/>
            <person name="Kreppel L."/>
            <person name="Scheel G."/>
            <person name="McDonald G."/>
            <person name="Ow D.W."/>
        </authorList>
    </citation>
    <scope>NUCLEOTIDE SEQUENCE [MRNA]</scope>
</reference>
<reference key="2">
    <citation type="journal article" date="1997" name="DNA Res.">
        <title>Identification of open reading frames in Schizosaccharomyces pombe cDNAs.</title>
        <authorList>
            <person name="Yoshioka S."/>
            <person name="Kato K."/>
            <person name="Nakai K."/>
            <person name="Okayama H."/>
            <person name="Nojima H."/>
        </authorList>
    </citation>
    <scope>NUCLEOTIDE SEQUENCE [LARGE SCALE MRNA]</scope>
    <source>
        <strain>PR745</strain>
    </source>
</reference>
<reference key="3">
    <citation type="journal article" date="2002" name="Nature">
        <title>The genome sequence of Schizosaccharomyces pombe.</title>
        <authorList>
            <person name="Wood V."/>
            <person name="Gwilliam R."/>
            <person name="Rajandream M.A."/>
            <person name="Lyne M.H."/>
            <person name="Lyne R."/>
            <person name="Stewart A."/>
            <person name="Sgouros J.G."/>
            <person name="Peat N."/>
            <person name="Hayles J."/>
            <person name="Baker S.G."/>
            <person name="Basham D."/>
            <person name="Bowman S."/>
            <person name="Brooks K."/>
            <person name="Brown D."/>
            <person name="Brown S."/>
            <person name="Chillingworth T."/>
            <person name="Churcher C.M."/>
            <person name="Collins M."/>
            <person name="Connor R."/>
            <person name="Cronin A."/>
            <person name="Davis P."/>
            <person name="Feltwell T."/>
            <person name="Fraser A."/>
            <person name="Gentles S."/>
            <person name="Goble A."/>
            <person name="Hamlin N."/>
            <person name="Harris D.E."/>
            <person name="Hidalgo J."/>
            <person name="Hodgson G."/>
            <person name="Holroyd S."/>
            <person name="Hornsby T."/>
            <person name="Howarth S."/>
            <person name="Huckle E.J."/>
            <person name="Hunt S."/>
            <person name="Jagels K."/>
            <person name="James K.D."/>
            <person name="Jones L."/>
            <person name="Jones M."/>
            <person name="Leather S."/>
            <person name="McDonald S."/>
            <person name="McLean J."/>
            <person name="Mooney P."/>
            <person name="Moule S."/>
            <person name="Mungall K.L."/>
            <person name="Murphy L.D."/>
            <person name="Niblett D."/>
            <person name="Odell C."/>
            <person name="Oliver K."/>
            <person name="O'Neil S."/>
            <person name="Pearson D."/>
            <person name="Quail M.A."/>
            <person name="Rabbinowitsch E."/>
            <person name="Rutherford K.M."/>
            <person name="Rutter S."/>
            <person name="Saunders D."/>
            <person name="Seeger K."/>
            <person name="Sharp S."/>
            <person name="Skelton J."/>
            <person name="Simmonds M.N."/>
            <person name="Squares R."/>
            <person name="Squares S."/>
            <person name="Stevens K."/>
            <person name="Taylor K."/>
            <person name="Taylor R.G."/>
            <person name="Tivey A."/>
            <person name="Walsh S.V."/>
            <person name="Warren T."/>
            <person name="Whitehead S."/>
            <person name="Woodward J.R."/>
            <person name="Volckaert G."/>
            <person name="Aert R."/>
            <person name="Robben J."/>
            <person name="Grymonprez B."/>
            <person name="Weltjens I."/>
            <person name="Vanstreels E."/>
            <person name="Rieger M."/>
            <person name="Schaefer M."/>
            <person name="Mueller-Auer S."/>
            <person name="Gabel C."/>
            <person name="Fuchs M."/>
            <person name="Duesterhoeft A."/>
            <person name="Fritzc C."/>
            <person name="Holzer E."/>
            <person name="Moestl D."/>
            <person name="Hilbert H."/>
            <person name="Borzym K."/>
            <person name="Langer I."/>
            <person name="Beck A."/>
            <person name="Lehrach H."/>
            <person name="Reinhardt R."/>
            <person name="Pohl T.M."/>
            <person name="Eger P."/>
            <person name="Zimmermann W."/>
            <person name="Wedler H."/>
            <person name="Wambutt R."/>
            <person name="Purnelle B."/>
            <person name="Goffeau A."/>
            <person name="Cadieu E."/>
            <person name="Dreano S."/>
            <person name="Gloux S."/>
            <person name="Lelaure V."/>
            <person name="Mottier S."/>
            <person name="Galibert F."/>
            <person name="Aves S.J."/>
            <person name="Xiang Z."/>
            <person name="Hunt C."/>
            <person name="Moore K."/>
            <person name="Hurst S.M."/>
            <person name="Lucas M."/>
            <person name="Rochet M."/>
            <person name="Gaillardin C."/>
            <person name="Tallada V.A."/>
            <person name="Garzon A."/>
            <person name="Thode G."/>
            <person name="Daga R.R."/>
            <person name="Cruzado L."/>
            <person name="Jimenez J."/>
            <person name="Sanchez M."/>
            <person name="del Rey F."/>
            <person name="Benito J."/>
            <person name="Dominguez A."/>
            <person name="Revuelta J.L."/>
            <person name="Moreno S."/>
            <person name="Armstrong J."/>
            <person name="Forsburg S.L."/>
            <person name="Cerutti L."/>
            <person name="Lowe T."/>
            <person name="McCombie W.R."/>
            <person name="Paulsen I."/>
            <person name="Potashkin J."/>
            <person name="Shpakovski G.V."/>
            <person name="Ussery D."/>
            <person name="Barrell B.G."/>
            <person name="Nurse P."/>
        </authorList>
    </citation>
    <scope>NUCLEOTIDE SEQUENCE [LARGE SCALE GENOMIC DNA]</scope>
    <source>
        <strain>972 / ATCC 24843</strain>
    </source>
</reference>
<reference key="4">
    <citation type="journal article" date="1973" name="Biochim. Biophys. Acta">
        <title>Regulation of the biosynthesis of purine nucleotides in Schizosaccharomyces pombe. 3. Kinetic studies of adenylosuccinate synthetase.</title>
        <authorList>
            <person name="Nagy M."/>
            <person name="Djembo-Taty M."/>
            <person name="Heslot H."/>
        </authorList>
    </citation>
    <scope>FUNCTION</scope>
    <scope>BIOPHYSICOCHEMICAL PROPERTIES</scope>
    <scope>ACTIVITY REGULATION</scope>
</reference>
<feature type="chain" id="PRO_0000095137" description="Adenylosuccinate synthetase">
    <location>
        <begin position="1"/>
        <end position="434"/>
    </location>
</feature>
<feature type="active site" description="Proton acceptor" evidence="1">
    <location>
        <position position="26"/>
    </location>
</feature>
<feature type="active site" description="Proton donor" evidence="1">
    <location>
        <position position="54"/>
    </location>
</feature>
<feature type="binding site" evidence="1">
    <location>
        <begin position="25"/>
        <end position="31"/>
    </location>
    <ligand>
        <name>GTP</name>
        <dbReference type="ChEBI" id="CHEBI:37565"/>
    </ligand>
</feature>
<feature type="binding site" description="in other chain" evidence="1">
    <location>
        <begin position="26"/>
        <end position="29"/>
    </location>
    <ligand>
        <name>IMP</name>
        <dbReference type="ChEBI" id="CHEBI:58053"/>
        <note>ligand shared between dimeric partners</note>
    </ligand>
</feature>
<feature type="binding site" evidence="1">
    <location>
        <position position="26"/>
    </location>
    <ligand>
        <name>Mg(2+)</name>
        <dbReference type="ChEBI" id="CHEBI:18420"/>
    </ligand>
</feature>
<feature type="binding site" description="in other chain" evidence="1">
    <location>
        <begin position="51"/>
        <end position="54"/>
    </location>
    <ligand>
        <name>IMP</name>
        <dbReference type="ChEBI" id="CHEBI:58053"/>
        <note>ligand shared between dimeric partners</note>
    </ligand>
</feature>
<feature type="binding site" evidence="1">
    <location>
        <begin position="53"/>
        <end position="55"/>
    </location>
    <ligand>
        <name>GTP</name>
        <dbReference type="ChEBI" id="CHEBI:37565"/>
    </ligand>
</feature>
<feature type="binding site" evidence="1">
    <location>
        <position position="53"/>
    </location>
    <ligand>
        <name>Mg(2+)</name>
        <dbReference type="ChEBI" id="CHEBI:18420"/>
    </ligand>
</feature>
<feature type="binding site" description="in other chain" evidence="1">
    <location>
        <position position="142"/>
    </location>
    <ligand>
        <name>IMP</name>
        <dbReference type="ChEBI" id="CHEBI:58053"/>
        <note>ligand shared between dimeric partners</note>
    </ligand>
</feature>
<feature type="binding site" evidence="1">
    <location>
        <position position="156"/>
    </location>
    <ligand>
        <name>IMP</name>
        <dbReference type="ChEBI" id="CHEBI:58053"/>
        <note>ligand shared between dimeric partners</note>
    </ligand>
</feature>
<feature type="binding site" description="in other chain" evidence="1">
    <location>
        <position position="233"/>
    </location>
    <ligand>
        <name>IMP</name>
        <dbReference type="ChEBI" id="CHEBI:58053"/>
        <note>ligand shared between dimeric partners</note>
    </ligand>
</feature>
<feature type="binding site" description="in other chain" evidence="1">
    <location>
        <position position="248"/>
    </location>
    <ligand>
        <name>IMP</name>
        <dbReference type="ChEBI" id="CHEBI:58053"/>
        <note>ligand shared between dimeric partners</note>
    </ligand>
</feature>
<feature type="binding site" evidence="1">
    <location>
        <begin position="308"/>
        <end position="314"/>
    </location>
    <ligand>
        <name>substrate</name>
    </ligand>
</feature>
<feature type="binding site" description="in other chain" evidence="1">
    <location>
        <position position="312"/>
    </location>
    <ligand>
        <name>IMP</name>
        <dbReference type="ChEBI" id="CHEBI:58053"/>
        <note>ligand shared between dimeric partners</note>
    </ligand>
</feature>
<feature type="binding site" evidence="1">
    <location>
        <position position="314"/>
    </location>
    <ligand>
        <name>GTP</name>
        <dbReference type="ChEBI" id="CHEBI:37565"/>
    </ligand>
</feature>
<feature type="binding site" evidence="1">
    <location>
        <begin position="340"/>
        <end position="342"/>
    </location>
    <ligand>
        <name>GTP</name>
        <dbReference type="ChEBI" id="CHEBI:37565"/>
    </ligand>
</feature>
<feature type="binding site" evidence="1">
    <location>
        <begin position="422"/>
        <end position="424"/>
    </location>
    <ligand>
        <name>GTP</name>
        <dbReference type="ChEBI" id="CHEBI:37565"/>
    </ligand>
</feature>
<feature type="sequence conflict" description="In Ref. 1; AAA70333." evidence="3" ref="1">
    <original>E</original>
    <variation>V</variation>
    <location>
        <position position="100"/>
    </location>
</feature>
<feature type="sequence conflict" description="In Ref. 1; AAA70333." evidence="3" ref="1">
    <original>I</original>
    <variation>L</variation>
    <location>
        <position position="110"/>
    </location>
</feature>
<evidence type="ECO:0000255" key="1">
    <source>
        <dbReference type="HAMAP-Rule" id="MF_03125"/>
    </source>
</evidence>
<evidence type="ECO:0000269" key="2">
    <source>
    </source>
</evidence>
<evidence type="ECO:0000305" key="3"/>
<comment type="function">
    <text evidence="2">Plays an important role in the de novo pathway and in the salvage pathway of purine nucleotide biosynthesis. Catalyzes the first committed step in the biosynthesis of AMP from IMP.</text>
</comment>
<comment type="catalytic activity">
    <reaction evidence="1">
        <text>IMP + L-aspartate + GTP = N(6)-(1,2-dicarboxyethyl)-AMP + GDP + phosphate + 2 H(+)</text>
        <dbReference type="Rhea" id="RHEA:15753"/>
        <dbReference type="ChEBI" id="CHEBI:15378"/>
        <dbReference type="ChEBI" id="CHEBI:29991"/>
        <dbReference type="ChEBI" id="CHEBI:37565"/>
        <dbReference type="ChEBI" id="CHEBI:43474"/>
        <dbReference type="ChEBI" id="CHEBI:57567"/>
        <dbReference type="ChEBI" id="CHEBI:58053"/>
        <dbReference type="ChEBI" id="CHEBI:58189"/>
        <dbReference type="EC" id="6.3.4.4"/>
    </reaction>
</comment>
<comment type="cofactor">
    <cofactor evidence="1">
        <name>Mg(2+)</name>
        <dbReference type="ChEBI" id="CHEBI:18420"/>
    </cofactor>
    <text evidence="1">Binds 1 Mg(2+) ion per subunit.</text>
</comment>
<comment type="activity regulation">
    <text evidence="2">Competitively Inhibited by GMP. Allosterically inhibited by AMP.</text>
</comment>
<comment type="biophysicochemical properties">
    <kinetics>
        <KM evidence="2">1500 uM for L-aspartate</KM>
        <KM evidence="2">200 uM for IMP</KM>
        <KM evidence="2">20 uM for GTP</KM>
    </kinetics>
</comment>
<comment type="pathway">
    <text evidence="1">Purine metabolism; AMP biosynthesis via de novo pathway; AMP from IMP: step 1/2.</text>
</comment>
<comment type="subunit">
    <text evidence="1">Homodimer.</text>
</comment>
<comment type="subcellular location">
    <subcellularLocation>
        <location evidence="1">Cytoplasm</location>
    </subcellularLocation>
</comment>
<comment type="similarity">
    <text evidence="1">Belongs to the adenylosuccinate synthetase family.</text>
</comment>
<keyword id="KW-0963">Cytoplasm</keyword>
<keyword id="KW-0342">GTP-binding</keyword>
<keyword id="KW-0436">Ligase</keyword>
<keyword id="KW-0460">Magnesium</keyword>
<keyword id="KW-0479">Metal-binding</keyword>
<keyword id="KW-0547">Nucleotide-binding</keyword>
<keyword id="KW-0658">Purine biosynthesis</keyword>
<keyword id="KW-1185">Reference proteome</keyword>
<organism>
    <name type="scientific">Schizosaccharomyces pombe (strain 972 / ATCC 24843)</name>
    <name type="common">Fission yeast</name>
    <dbReference type="NCBI Taxonomy" id="284812"/>
    <lineage>
        <taxon>Eukaryota</taxon>
        <taxon>Fungi</taxon>
        <taxon>Dikarya</taxon>
        <taxon>Ascomycota</taxon>
        <taxon>Taphrinomycotina</taxon>
        <taxon>Schizosaccharomycetes</taxon>
        <taxon>Schizosaccharomycetales</taxon>
        <taxon>Schizosaccharomycetaceae</taxon>
        <taxon>Schizosaccharomyces</taxon>
    </lineage>
</organism>
<sequence length="434" mass="47877">MASVRETGVNVSNDGITVVLGSQWGDEGKGKLVDILCDNVDVCARCQGGNNAGHTIVANGVTYDFHILPSGLVNPKCQNLIGSGVVVYLPAFFSELEKLEQKGLKCRDRIFISDRAHLVFDYHQRADALNEAELGKQSIGTTGKGIGPAYSTKATRSGIRVHHLYHWAEFEARYRKNVADLQKRYGAFEYDVEAELIRYKELAQRLKPFVIDAVAFMYEALQSKKRILVEGANALMLDLDFGTYPFVTSSNTTVGGVCTGLGVPPQRIANSIGVVKAYTTRVGAGPFPTEQLNEIGDHLQSVGREVGVTTGRKRRCGWLDLVVVKYSTMINGYTSLNLTKLDILDALDEIKVAVAYIINGKRIETFPADLDSLEEAEIVYETFPGWKVPTTGITHWDQMPENAKKYIEFIEKFVGVPITFIGVGPGRDEMLVKE</sequence>
<accession>Q02787</accession>
<accession>P79061</accession>
<gene>
    <name type="primary">ade2</name>
    <name type="ORF">SPAC144.03</name>
</gene>
<protein>
    <recommendedName>
        <fullName evidence="1">Adenylosuccinate synthetase</fullName>
        <shortName evidence="1">AMPSase</shortName>
        <shortName evidence="1">AdSS</shortName>
        <ecNumber evidence="1">6.3.4.4</ecNumber>
    </recommendedName>
    <alternativeName>
        <fullName evidence="1">IMP--aspartate ligase</fullName>
    </alternativeName>
</protein>